<organism>
    <name type="scientific">Schizosaccharomyces pombe (strain 972 / ATCC 24843)</name>
    <name type="common">Fission yeast</name>
    <dbReference type="NCBI Taxonomy" id="284812"/>
    <lineage>
        <taxon>Eukaryota</taxon>
        <taxon>Fungi</taxon>
        <taxon>Dikarya</taxon>
        <taxon>Ascomycota</taxon>
        <taxon>Taphrinomycotina</taxon>
        <taxon>Schizosaccharomycetes</taxon>
        <taxon>Schizosaccharomycetales</taxon>
        <taxon>Schizosaccharomycetaceae</taxon>
        <taxon>Schizosaccharomyces</taxon>
    </lineage>
</organism>
<keyword id="KW-1003">Cell membrane</keyword>
<keyword id="KW-0325">Glycoprotein</keyword>
<keyword id="KW-0336">GPI-anchor</keyword>
<keyword id="KW-0449">Lipoprotein</keyword>
<keyword id="KW-0472">Membrane</keyword>
<keyword id="KW-1185">Reference proteome</keyword>
<keyword id="KW-0732">Signal</keyword>
<keyword id="KW-0926">Vacuole</keyword>
<gene>
    <name evidence="5" type="primary">shu1</name>
    <name evidence="8" type="ORF">SPAC1F8.02c</name>
</gene>
<dbReference type="EMBL" id="CU329670">
    <property type="protein sequence ID" value="CAB03596.1"/>
    <property type="molecule type" value="Genomic_DNA"/>
</dbReference>
<dbReference type="PIR" id="T38109">
    <property type="entry name" value="T38109"/>
</dbReference>
<dbReference type="RefSeq" id="NP_592791.1">
    <property type="nucleotide sequence ID" value="NM_001018191.2"/>
</dbReference>
<dbReference type="BioGRID" id="278312">
    <property type="interactions" value="2"/>
</dbReference>
<dbReference type="STRING" id="284812.Q92340"/>
<dbReference type="PaxDb" id="4896-SPAC1F8.02c.1"/>
<dbReference type="EnsemblFungi" id="SPAC1F8.02c.1">
    <property type="protein sequence ID" value="SPAC1F8.02c.1:pep"/>
    <property type="gene ID" value="SPAC1F8.02c"/>
</dbReference>
<dbReference type="GeneID" id="2541821"/>
<dbReference type="KEGG" id="spo:2541821"/>
<dbReference type="PomBase" id="SPAC1F8.02c">
    <property type="gene designation" value="shu1"/>
</dbReference>
<dbReference type="VEuPathDB" id="FungiDB:SPAC1F8.02c"/>
<dbReference type="HOGENOM" id="CLU_1225408_0_0_1"/>
<dbReference type="InParanoid" id="Q92340"/>
<dbReference type="PRO" id="PR:Q92340"/>
<dbReference type="Proteomes" id="UP000002485">
    <property type="component" value="Chromosome I"/>
</dbReference>
<dbReference type="GO" id="GO:0009897">
    <property type="term" value="C:external side of plasma membrane"/>
    <property type="evidence" value="ECO:0000304"/>
    <property type="project" value="PomBase"/>
</dbReference>
<dbReference type="GO" id="GO:0000324">
    <property type="term" value="C:fungal-type vacuole"/>
    <property type="evidence" value="ECO:0000314"/>
    <property type="project" value="PomBase"/>
</dbReference>
<dbReference type="GO" id="GO:0005886">
    <property type="term" value="C:plasma membrane"/>
    <property type="evidence" value="ECO:0000314"/>
    <property type="project" value="PomBase"/>
</dbReference>
<dbReference type="GO" id="GO:0005774">
    <property type="term" value="C:vacuolar membrane"/>
    <property type="evidence" value="ECO:0007669"/>
    <property type="project" value="UniProtKB-SubCell"/>
</dbReference>
<dbReference type="GO" id="GO:0020037">
    <property type="term" value="F:heme binding"/>
    <property type="evidence" value="ECO:0000314"/>
    <property type="project" value="PomBase"/>
</dbReference>
<dbReference type="GO" id="GO:0140488">
    <property type="term" value="F:heme receptor activity"/>
    <property type="evidence" value="ECO:0000314"/>
    <property type="project" value="PomBase"/>
</dbReference>
<dbReference type="GO" id="GO:0010106">
    <property type="term" value="P:cellular response to iron ion starvation"/>
    <property type="evidence" value="ECO:0000315"/>
    <property type="project" value="PomBase"/>
</dbReference>
<dbReference type="GO" id="GO:0140420">
    <property type="term" value="P:heme import into cell"/>
    <property type="evidence" value="ECO:0000315"/>
    <property type="project" value="PomBase"/>
</dbReference>
<dbReference type="GO" id="GO:0015886">
    <property type="term" value="P:heme transport"/>
    <property type="evidence" value="ECO:0000315"/>
    <property type="project" value="PomBase"/>
</dbReference>
<protein>
    <recommendedName>
        <fullName evidence="6">High affinity heme transporter</fullName>
    </recommendedName>
</protein>
<comment type="function">
    <text evidence="2 3 4">High affinity heme transporter involved in the assimilation of exogenous heme during conditions of low cellular iron.</text>
</comment>
<comment type="subcellular location">
    <subcellularLocation>
        <location evidence="2 3">Cell membrane</location>
        <topology evidence="7">Lipid-anchor</topology>
        <topology evidence="7">GPI-anchor</topology>
    </subcellularLocation>
    <subcellularLocation>
        <location evidence="3">Vacuole membrane</location>
        <topology evidence="7">Lipid-anchor</topology>
        <topology evidence="7">GPI-anchor</topology>
    </subcellularLocation>
    <text evidence="3">Localizes from the cell membrane to the vacuolar membrane in the presence of heme.</text>
</comment>
<comment type="induction">
    <text evidence="2">Induced in iron-deplete conditions (at protein level) (PubMed:25733668). Repressed in iron-replete conditions by transcriptional repressor fep1 (PubMed:25733668).</text>
</comment>
<comment type="disruption phenotype">
    <text evidence="2 3 4">Impairs heme import into cell; simultaneous disruption of str3 exacerbates the effect.</text>
</comment>
<accession>Q92340</accession>
<name>SHU1_SCHPO</name>
<sequence length="226" mass="25022">MISLKIYFVLIFLFLKGINSAYVSNEEGETVDFTFSGFYANLTYPNEISELNYVEGNYLSTRIVRFNGSFYCDTTILSETNNVTGSCYVANCANDTVLEICDSGKEVHFTDMSGTTWSADTFTENLYWFCGGDGNKPNMTTAAAMNSDIDSYYVYGNWTIDTADSTVADYTCNYTHFQEAGDIEKGDVYTASADSSDSSSASSTIFKPSYFISCLLSVGLYLVLNF</sequence>
<reference key="1">
    <citation type="journal article" date="2002" name="Nature">
        <title>The genome sequence of Schizosaccharomyces pombe.</title>
        <authorList>
            <person name="Wood V."/>
            <person name="Gwilliam R."/>
            <person name="Rajandream M.A."/>
            <person name="Lyne M.H."/>
            <person name="Lyne R."/>
            <person name="Stewart A."/>
            <person name="Sgouros J.G."/>
            <person name="Peat N."/>
            <person name="Hayles J."/>
            <person name="Baker S.G."/>
            <person name="Basham D."/>
            <person name="Bowman S."/>
            <person name="Brooks K."/>
            <person name="Brown D."/>
            <person name="Brown S."/>
            <person name="Chillingworth T."/>
            <person name="Churcher C.M."/>
            <person name="Collins M."/>
            <person name="Connor R."/>
            <person name="Cronin A."/>
            <person name="Davis P."/>
            <person name="Feltwell T."/>
            <person name="Fraser A."/>
            <person name="Gentles S."/>
            <person name="Goble A."/>
            <person name="Hamlin N."/>
            <person name="Harris D.E."/>
            <person name="Hidalgo J."/>
            <person name="Hodgson G."/>
            <person name="Holroyd S."/>
            <person name="Hornsby T."/>
            <person name="Howarth S."/>
            <person name="Huckle E.J."/>
            <person name="Hunt S."/>
            <person name="Jagels K."/>
            <person name="James K.D."/>
            <person name="Jones L."/>
            <person name="Jones M."/>
            <person name="Leather S."/>
            <person name="McDonald S."/>
            <person name="McLean J."/>
            <person name="Mooney P."/>
            <person name="Moule S."/>
            <person name="Mungall K.L."/>
            <person name="Murphy L.D."/>
            <person name="Niblett D."/>
            <person name="Odell C."/>
            <person name="Oliver K."/>
            <person name="O'Neil S."/>
            <person name="Pearson D."/>
            <person name="Quail M.A."/>
            <person name="Rabbinowitsch E."/>
            <person name="Rutherford K.M."/>
            <person name="Rutter S."/>
            <person name="Saunders D."/>
            <person name="Seeger K."/>
            <person name="Sharp S."/>
            <person name="Skelton J."/>
            <person name="Simmonds M.N."/>
            <person name="Squares R."/>
            <person name="Squares S."/>
            <person name="Stevens K."/>
            <person name="Taylor K."/>
            <person name="Taylor R.G."/>
            <person name="Tivey A."/>
            <person name="Walsh S.V."/>
            <person name="Warren T."/>
            <person name="Whitehead S."/>
            <person name="Woodward J.R."/>
            <person name="Volckaert G."/>
            <person name="Aert R."/>
            <person name="Robben J."/>
            <person name="Grymonprez B."/>
            <person name="Weltjens I."/>
            <person name="Vanstreels E."/>
            <person name="Rieger M."/>
            <person name="Schaefer M."/>
            <person name="Mueller-Auer S."/>
            <person name="Gabel C."/>
            <person name="Fuchs M."/>
            <person name="Duesterhoeft A."/>
            <person name="Fritzc C."/>
            <person name="Holzer E."/>
            <person name="Moestl D."/>
            <person name="Hilbert H."/>
            <person name="Borzym K."/>
            <person name="Langer I."/>
            <person name="Beck A."/>
            <person name="Lehrach H."/>
            <person name="Reinhardt R."/>
            <person name="Pohl T.M."/>
            <person name="Eger P."/>
            <person name="Zimmermann W."/>
            <person name="Wedler H."/>
            <person name="Wambutt R."/>
            <person name="Purnelle B."/>
            <person name="Goffeau A."/>
            <person name="Cadieu E."/>
            <person name="Dreano S."/>
            <person name="Gloux S."/>
            <person name="Lelaure V."/>
            <person name="Mottier S."/>
            <person name="Galibert F."/>
            <person name="Aves S.J."/>
            <person name="Xiang Z."/>
            <person name="Hunt C."/>
            <person name="Moore K."/>
            <person name="Hurst S.M."/>
            <person name="Lucas M."/>
            <person name="Rochet M."/>
            <person name="Gaillardin C."/>
            <person name="Tallada V.A."/>
            <person name="Garzon A."/>
            <person name="Thode G."/>
            <person name="Daga R.R."/>
            <person name="Cruzado L."/>
            <person name="Jimenez J."/>
            <person name="Sanchez M."/>
            <person name="del Rey F."/>
            <person name="Benito J."/>
            <person name="Dominguez A."/>
            <person name="Revuelta J.L."/>
            <person name="Moreno S."/>
            <person name="Armstrong J."/>
            <person name="Forsburg S.L."/>
            <person name="Cerutti L."/>
            <person name="Lowe T."/>
            <person name="McCombie W.R."/>
            <person name="Paulsen I."/>
            <person name="Potashkin J."/>
            <person name="Shpakovski G.V."/>
            <person name="Ussery D."/>
            <person name="Barrell B.G."/>
            <person name="Nurse P."/>
        </authorList>
    </citation>
    <scope>NUCLEOTIDE SEQUENCE [LARGE SCALE GENOMIC DNA]</scope>
    <source>
        <strain>972 / ATCC 24843</strain>
    </source>
</reference>
<reference key="2">
    <citation type="journal article" date="2015" name="J. Biol. Chem.">
        <title>Shu1 is a cell-surface protein involved in iron acquisition from heme in Schizosaccharomyces pombe.</title>
        <authorList>
            <person name="Mourer T."/>
            <person name="Jacques J.F."/>
            <person name="Brault A."/>
            <person name="Bisaillon M."/>
            <person name="Labbe S."/>
        </authorList>
    </citation>
    <scope>FUNCTION</scope>
    <scope>SUBCELLULAR LOCATION</scope>
    <scope>INDUCTION</scope>
    <scope>DISRUPTION PHENOTYPE</scope>
    <scope>MUTAGENESIS OF CYS-72; CYS-87; CYS-92 AND CYS-101</scope>
</reference>
<reference key="3">
    <citation type="journal article" date="2017" name="J. Biol. Chem.">
        <title>Heme Assimilation in Schizosaccharomyces pombe Requires Cell-surface-anchored Protein Shu1 and Vacuolar Transporter Abc3.</title>
        <authorList>
            <person name="Mourer T."/>
            <person name="Normant V."/>
            <person name="Labbe S."/>
        </authorList>
    </citation>
    <scope>FUNCTION</scope>
    <scope>SUBCELLULAR LOCATION</scope>
    <scope>DISRUPTION PHENOTYPE</scope>
    <scope>MUTAGENESIS OF CYS-72; CYS-87; CYS-92 AND CYS-101</scope>
</reference>
<reference key="4">
    <citation type="journal article" date="2018" name="J. Biol. Chem.">
        <title>The major facilitator transporter Str3 is required for low-affinity heme acquisition in Schizosaccharomyces pombe.</title>
        <authorList>
            <person name="Normant V."/>
            <person name="Mourer T."/>
            <person name="Labbe S."/>
        </authorList>
    </citation>
    <scope>FUNCTION</scope>
    <scope>DISRUPTION PHENOTYPE</scope>
</reference>
<evidence type="ECO:0000255" key="1"/>
<evidence type="ECO:0000269" key="2">
    <source>
    </source>
</evidence>
<evidence type="ECO:0000269" key="3">
    <source>
    </source>
</evidence>
<evidence type="ECO:0000269" key="4">
    <source>
    </source>
</evidence>
<evidence type="ECO:0000303" key="5">
    <source>
    </source>
</evidence>
<evidence type="ECO:0000305" key="6"/>
<evidence type="ECO:0000305" key="7">
    <source>
    </source>
</evidence>
<evidence type="ECO:0000312" key="8">
    <source>
        <dbReference type="PomBase" id="SPAC1F8.02c"/>
    </source>
</evidence>
<proteinExistence type="evidence at protein level"/>
<feature type="signal peptide" evidence="1">
    <location>
        <begin position="1"/>
        <end position="20"/>
    </location>
</feature>
<feature type="chain" id="PRO_0000116632" description="High affinity heme transporter">
    <location>
        <begin position="21"/>
        <end position="199"/>
    </location>
</feature>
<feature type="propeptide" id="PRO_0000389138" description="Removed in mature form" evidence="1">
    <location>
        <begin position="200"/>
        <end position="226"/>
    </location>
</feature>
<feature type="region of interest" description="Heme binding" evidence="2">
    <location>
        <begin position="72"/>
        <end position="101"/>
    </location>
</feature>
<feature type="lipid moiety-binding region" description="GPI-anchor amidated serine" evidence="1">
    <location>
        <position position="199"/>
    </location>
</feature>
<feature type="mutagenesis site" description="Decreases heme binding and cellular heme import, and abolishes relocalization from the plasma membrane to vacuole in presence of heme; when associated with A-87; A-92 and A-101." evidence="2 3">
    <original>C</original>
    <variation>A</variation>
    <location>
        <position position="72"/>
    </location>
</feature>
<feature type="mutagenesis site" description="Decreases heme binding and cellular heme import, and abolishes plasma membrane to vacuole localization in presence of heme; when associated with A-72; A-92 and A-101." evidence="2 3">
    <original>C</original>
    <variation>A</variation>
    <location>
        <position position="87"/>
    </location>
</feature>
<feature type="mutagenesis site" description="Decreases heme binding and cellular heme import, and abolishes plasma membrane to vacuole localization in presence of heme; when associated with A-72; A-87 and A-101." evidence="2 3">
    <original>C</original>
    <variation>A</variation>
    <location>
        <position position="92"/>
    </location>
</feature>
<feature type="mutagenesis site" description="Decreases heme binding and cellular heme import, and abolishes plasma membrane to vacuole localization in presence of heme; when associated with A-72; A-87 and A-92." evidence="2 3">
    <original>C</original>
    <variation>A</variation>
    <location>
        <position position="101"/>
    </location>
</feature>